<name>YMGI_ECOLI</name>
<reference key="1">
    <citation type="journal article" date="1997" name="Science">
        <title>The complete genome sequence of Escherichia coli K-12.</title>
        <authorList>
            <person name="Blattner F.R."/>
            <person name="Plunkett G. III"/>
            <person name="Bloch C.A."/>
            <person name="Perna N.T."/>
            <person name="Burland V."/>
            <person name="Riley M."/>
            <person name="Collado-Vides J."/>
            <person name="Glasner J.D."/>
            <person name="Rode C.K."/>
            <person name="Mayhew G.F."/>
            <person name="Gregor J."/>
            <person name="Davis N.W."/>
            <person name="Kirkpatrick H.A."/>
            <person name="Goeden M.A."/>
            <person name="Rose D.J."/>
            <person name="Mau B."/>
            <person name="Shao Y."/>
        </authorList>
    </citation>
    <scope>NUCLEOTIDE SEQUENCE [LARGE SCALE GENOMIC DNA]</scope>
    <source>
        <strain>K12 / MG1655 / ATCC 47076</strain>
    </source>
</reference>
<organism>
    <name type="scientific">Escherichia coli (strain K12)</name>
    <dbReference type="NCBI Taxonomy" id="83333"/>
    <lineage>
        <taxon>Bacteria</taxon>
        <taxon>Pseudomonadati</taxon>
        <taxon>Pseudomonadota</taxon>
        <taxon>Gammaproteobacteria</taxon>
        <taxon>Enterobacterales</taxon>
        <taxon>Enterobacteriaceae</taxon>
        <taxon>Escherichia</taxon>
    </lineage>
</organism>
<protein>
    <recommendedName>
        <fullName>Uncharacterized protein YmgI</fullName>
    </recommendedName>
</protein>
<proteinExistence type="predicted"/>
<sequence length="57" mass="6518">MSYSSFKIILIHVKNIIPIITATLILNYLNNSERSLVKQILIEDEIIVCATYLIPDI</sequence>
<keyword id="KW-1185">Reference proteome</keyword>
<accession>A5A611</accession>
<feature type="chain" id="PRO_0000311779" description="Uncharacterized protein YmgI">
    <location>
        <begin position="1"/>
        <end position="57"/>
    </location>
</feature>
<gene>
    <name type="primary">ymgI</name>
    <name type="ordered locus">b4593</name>
</gene>
<dbReference type="EMBL" id="U00096">
    <property type="protein sequence ID" value="ABP93440.1"/>
    <property type="molecule type" value="Genomic_DNA"/>
</dbReference>
<dbReference type="RefSeq" id="WP_000122462.1">
    <property type="nucleotide sequence ID" value="NZ_SSZK01000010.1"/>
</dbReference>
<dbReference type="RefSeq" id="YP_001165314.1">
    <property type="nucleotide sequence ID" value="NC_000913.3"/>
</dbReference>
<dbReference type="FunCoup" id="A5A611">
    <property type="interactions" value="26"/>
</dbReference>
<dbReference type="STRING" id="511145.b4593"/>
<dbReference type="PaxDb" id="511145-b4593"/>
<dbReference type="EnsemblBacteria" id="ABP93440">
    <property type="protein sequence ID" value="ABP93440"/>
    <property type="gene ID" value="b4593"/>
</dbReference>
<dbReference type="GeneID" id="5061515"/>
<dbReference type="GeneID" id="93776263"/>
<dbReference type="KEGG" id="eco:b4593"/>
<dbReference type="KEGG" id="ecoc:C3026_06910"/>
<dbReference type="PATRIC" id="fig|83333.103.peg.1965"/>
<dbReference type="eggNOG" id="ENOG5031J08">
    <property type="taxonomic scope" value="Bacteria"/>
</dbReference>
<dbReference type="InParanoid" id="A5A611"/>
<dbReference type="OrthoDB" id="9915918at2"/>
<dbReference type="BioCyc" id="EcoCyc:MONOMER0-2818"/>
<dbReference type="PRO" id="PR:A5A611"/>
<dbReference type="Proteomes" id="UP000000625">
    <property type="component" value="Chromosome"/>
</dbReference>